<accession>A4QNC6</accession>
<feature type="chain" id="PRO_0000296954" description="Protein FAM136A">
    <location>
        <begin position="1"/>
        <end position="138"/>
    </location>
</feature>
<protein>
    <recommendedName>
        <fullName>Protein FAM136A</fullName>
    </recommendedName>
</protein>
<comment type="similarity">
    <text evidence="1">Belongs to the FAM136 family.</text>
</comment>
<proteinExistence type="evidence at transcript level"/>
<name>F136A_XENTR</name>
<keyword id="KW-1185">Reference proteome</keyword>
<dbReference type="EMBL" id="BC135410">
    <property type="protein sequence ID" value="AAI35411.1"/>
    <property type="molecule type" value="mRNA"/>
</dbReference>
<dbReference type="RefSeq" id="NP_001016187.1">
    <property type="nucleotide sequence ID" value="NM_001016187.2"/>
</dbReference>
<dbReference type="FunCoup" id="A4QNC6">
    <property type="interactions" value="1485"/>
</dbReference>
<dbReference type="STRING" id="8364.ENSXETP00000028108"/>
<dbReference type="PaxDb" id="8364-ENSXETP00000018637"/>
<dbReference type="DNASU" id="548941"/>
<dbReference type="GeneID" id="548941"/>
<dbReference type="KEGG" id="xtr:548941"/>
<dbReference type="AGR" id="Xenbase:XB-GENE-943724"/>
<dbReference type="CTD" id="84908"/>
<dbReference type="Xenbase" id="XB-GENE-943724">
    <property type="gene designation" value="fam136a"/>
</dbReference>
<dbReference type="eggNOG" id="KOG3377">
    <property type="taxonomic scope" value="Eukaryota"/>
</dbReference>
<dbReference type="HOGENOM" id="CLU_110442_3_0_1"/>
<dbReference type="InParanoid" id="A4QNC6"/>
<dbReference type="OMA" id="EMEGCVV"/>
<dbReference type="OrthoDB" id="9975421at2759"/>
<dbReference type="PhylomeDB" id="A4QNC6"/>
<dbReference type="TreeFam" id="TF315119"/>
<dbReference type="Proteomes" id="UP000008143">
    <property type="component" value="Chromosome 3"/>
</dbReference>
<dbReference type="InterPro" id="IPR008560">
    <property type="entry name" value="DUF842_euk"/>
</dbReference>
<dbReference type="PANTHER" id="PTHR21096">
    <property type="entry name" value="PROTEIN FAM136A"/>
    <property type="match status" value="1"/>
</dbReference>
<dbReference type="PANTHER" id="PTHR21096:SF0">
    <property type="entry name" value="PROTEIN FAM136A"/>
    <property type="match status" value="1"/>
</dbReference>
<dbReference type="Pfam" id="PF05811">
    <property type="entry name" value="DUF842"/>
    <property type="match status" value="1"/>
</dbReference>
<evidence type="ECO:0000305" key="1"/>
<gene>
    <name type="primary">fam136a</name>
</gene>
<organism>
    <name type="scientific">Xenopus tropicalis</name>
    <name type="common">Western clawed frog</name>
    <name type="synonym">Silurana tropicalis</name>
    <dbReference type="NCBI Taxonomy" id="8364"/>
    <lineage>
        <taxon>Eukaryota</taxon>
        <taxon>Metazoa</taxon>
        <taxon>Chordata</taxon>
        <taxon>Craniata</taxon>
        <taxon>Vertebrata</taxon>
        <taxon>Euteleostomi</taxon>
        <taxon>Amphibia</taxon>
        <taxon>Batrachia</taxon>
        <taxon>Anura</taxon>
        <taxon>Pipoidea</taxon>
        <taxon>Pipidae</taxon>
        <taxon>Xenopodinae</taxon>
        <taxon>Xenopus</taxon>
        <taxon>Silurana</taxon>
    </lineage>
</organism>
<sequence>MAEEQQNRLQNAIDTMVKSLERDNIRKMQGKMFRCSAQCCEDNGASMQQVHHCIERCHTPLAQAQSLVTNELERFQNRLARCTMHCNDKAKDSFDSGSKEAQVKAQLEGCVIKCAEEHMNLIPSMTKKLKDALAQADK</sequence>
<reference key="1">
    <citation type="submission" date="2007-03" db="EMBL/GenBank/DDBJ databases">
        <authorList>
            <consortium name="NIH - Xenopus Gene Collection (XGC) project"/>
        </authorList>
    </citation>
    <scope>NUCLEOTIDE SEQUENCE [LARGE SCALE MRNA]</scope>
    <source>
        <tissue>Tadpole</tissue>
    </source>
</reference>